<reference key="1">
    <citation type="submission" date="2008-06" db="EMBL/GenBank/DDBJ databases">
        <title>Complete sequence of Chlorobium phaeobacteroides BS1.</title>
        <authorList>
            <consortium name="US DOE Joint Genome Institute"/>
            <person name="Lucas S."/>
            <person name="Copeland A."/>
            <person name="Lapidus A."/>
            <person name="Glavina del Rio T."/>
            <person name="Dalin E."/>
            <person name="Tice H."/>
            <person name="Bruce D."/>
            <person name="Goodwin L."/>
            <person name="Pitluck S."/>
            <person name="Schmutz J."/>
            <person name="Larimer F."/>
            <person name="Land M."/>
            <person name="Hauser L."/>
            <person name="Kyrpides N."/>
            <person name="Ovchinnikova G."/>
            <person name="Li T."/>
            <person name="Liu Z."/>
            <person name="Zhao F."/>
            <person name="Overmann J."/>
            <person name="Bryant D.A."/>
            <person name="Richardson P."/>
        </authorList>
    </citation>
    <scope>NUCLEOTIDE SEQUENCE [LARGE SCALE GENOMIC DNA]</scope>
    <source>
        <strain>BS1</strain>
    </source>
</reference>
<evidence type="ECO:0000255" key="1">
    <source>
        <dbReference type="HAMAP-Rule" id="MF_00071"/>
    </source>
</evidence>
<feature type="chain" id="PRO_1000092384" description="Elongation factor 4">
    <location>
        <begin position="1"/>
        <end position="605"/>
    </location>
</feature>
<feature type="domain" description="tr-type G">
    <location>
        <begin position="9"/>
        <end position="191"/>
    </location>
</feature>
<feature type="binding site" evidence="1">
    <location>
        <begin position="21"/>
        <end position="26"/>
    </location>
    <ligand>
        <name>GTP</name>
        <dbReference type="ChEBI" id="CHEBI:37565"/>
    </ligand>
</feature>
<feature type="binding site" evidence="1">
    <location>
        <begin position="138"/>
        <end position="141"/>
    </location>
    <ligand>
        <name>GTP</name>
        <dbReference type="ChEBI" id="CHEBI:37565"/>
    </ligand>
</feature>
<comment type="function">
    <text evidence="1">Required for accurate and efficient protein synthesis under certain stress conditions. May act as a fidelity factor of the translation reaction, by catalyzing a one-codon backward translocation of tRNAs on improperly translocated ribosomes. Back-translocation proceeds from a post-translocation (POST) complex to a pre-translocation (PRE) complex, thus giving elongation factor G a second chance to translocate the tRNAs correctly. Binds to ribosomes in a GTP-dependent manner.</text>
</comment>
<comment type="catalytic activity">
    <reaction evidence="1">
        <text>GTP + H2O = GDP + phosphate + H(+)</text>
        <dbReference type="Rhea" id="RHEA:19669"/>
        <dbReference type="ChEBI" id="CHEBI:15377"/>
        <dbReference type="ChEBI" id="CHEBI:15378"/>
        <dbReference type="ChEBI" id="CHEBI:37565"/>
        <dbReference type="ChEBI" id="CHEBI:43474"/>
        <dbReference type="ChEBI" id="CHEBI:58189"/>
        <dbReference type="EC" id="3.6.5.n1"/>
    </reaction>
</comment>
<comment type="subcellular location">
    <subcellularLocation>
        <location evidence="1">Cell inner membrane</location>
        <topology evidence="1">Peripheral membrane protein</topology>
        <orientation evidence="1">Cytoplasmic side</orientation>
    </subcellularLocation>
</comment>
<comment type="similarity">
    <text evidence="1">Belongs to the TRAFAC class translation factor GTPase superfamily. Classic translation factor GTPase family. LepA subfamily.</text>
</comment>
<keyword id="KW-0997">Cell inner membrane</keyword>
<keyword id="KW-1003">Cell membrane</keyword>
<keyword id="KW-0342">GTP-binding</keyword>
<keyword id="KW-0378">Hydrolase</keyword>
<keyword id="KW-0472">Membrane</keyword>
<keyword id="KW-0547">Nucleotide-binding</keyword>
<keyword id="KW-0648">Protein biosynthesis</keyword>
<proteinExistence type="inferred from homology"/>
<name>LEPA_CHLPB</name>
<accession>B3EPG7</accession>
<sequence>MSSSTTVVDTIRNFCIIAHIDHGKSTLADRFLEATDTLLHNQATAQVLDDMDLERERGITIKSHAIQMRYTSADGEEYILNLIDTPGHVDFSYEVSRSLAACEGALLVVDATQGVEAQTIANLYLAVEAGLEILPVINKIDLPSSDVEGVSQQIIDLMGVDRSEILEVSAKAGIGVDALLEAIIKRVPAPVDQRSKPLRALIFDSVFDAYRGAIVYLRIVDGMLNKGDRVRFFANEKVFLADEIGTMGLKRQPVKTLGAGDVGYLICSIKDVRDAKVGDTVTLADAPAKERLSGYKDVKPMVFSGLYPVNSNEFEDLRESLEKLSLNDASLVYTPETSAALGFGFRCGFLGLLHMEIIQERLEREYQVNIITTVPNVEYRVISSEGGTHVVDNPSKMPDAGFIEKIEEPYVSVQIITLAEYIGNIMKLAMERRGEYKNTDYLDTTRVNLHFEFPLAEIVFDFHDKLKSVSKGYASMDYEYIGYRDSDLVKLDVLLNGESVDALSTIVHRSKAYEWGRRLCQKLKSIIPRQMYEVAIQAAIGSRVIARETISAMRKNVLAKCYGGDISRKRKLLEKQKEGKKRMKQVGRVEIPQEAFLAVLNMDDQ</sequence>
<organism>
    <name type="scientific">Chlorobium phaeobacteroides (strain BS1)</name>
    <dbReference type="NCBI Taxonomy" id="331678"/>
    <lineage>
        <taxon>Bacteria</taxon>
        <taxon>Pseudomonadati</taxon>
        <taxon>Chlorobiota</taxon>
        <taxon>Chlorobiia</taxon>
        <taxon>Chlorobiales</taxon>
        <taxon>Chlorobiaceae</taxon>
        <taxon>Chlorobium/Pelodictyon group</taxon>
        <taxon>Chlorobium</taxon>
    </lineage>
</organism>
<gene>
    <name evidence="1" type="primary">lepA</name>
    <name type="ordered locus">Cphamn1_0900</name>
</gene>
<protein>
    <recommendedName>
        <fullName evidence="1">Elongation factor 4</fullName>
        <shortName evidence="1">EF-4</shortName>
        <ecNumber evidence="1">3.6.5.n1</ecNumber>
    </recommendedName>
    <alternativeName>
        <fullName evidence="1">Ribosomal back-translocase LepA</fullName>
    </alternativeName>
</protein>
<dbReference type="EC" id="3.6.5.n1" evidence="1"/>
<dbReference type="EMBL" id="CP001101">
    <property type="protein sequence ID" value="ACE03845.1"/>
    <property type="molecule type" value="Genomic_DNA"/>
</dbReference>
<dbReference type="SMR" id="B3EPG7"/>
<dbReference type="STRING" id="331678.Cphamn1_0900"/>
<dbReference type="KEGG" id="cpb:Cphamn1_0900"/>
<dbReference type="eggNOG" id="COG0481">
    <property type="taxonomic scope" value="Bacteria"/>
</dbReference>
<dbReference type="HOGENOM" id="CLU_009995_3_3_10"/>
<dbReference type="OrthoDB" id="9801591at2"/>
<dbReference type="GO" id="GO:0005886">
    <property type="term" value="C:plasma membrane"/>
    <property type="evidence" value="ECO:0007669"/>
    <property type="project" value="UniProtKB-SubCell"/>
</dbReference>
<dbReference type="GO" id="GO:0005525">
    <property type="term" value="F:GTP binding"/>
    <property type="evidence" value="ECO:0007669"/>
    <property type="project" value="UniProtKB-UniRule"/>
</dbReference>
<dbReference type="GO" id="GO:0003924">
    <property type="term" value="F:GTPase activity"/>
    <property type="evidence" value="ECO:0007669"/>
    <property type="project" value="UniProtKB-UniRule"/>
</dbReference>
<dbReference type="GO" id="GO:0043022">
    <property type="term" value="F:ribosome binding"/>
    <property type="evidence" value="ECO:0007669"/>
    <property type="project" value="UniProtKB-UniRule"/>
</dbReference>
<dbReference type="GO" id="GO:0003746">
    <property type="term" value="F:translation elongation factor activity"/>
    <property type="evidence" value="ECO:0007669"/>
    <property type="project" value="UniProtKB-UniRule"/>
</dbReference>
<dbReference type="GO" id="GO:0045727">
    <property type="term" value="P:positive regulation of translation"/>
    <property type="evidence" value="ECO:0007669"/>
    <property type="project" value="UniProtKB-UniRule"/>
</dbReference>
<dbReference type="CDD" id="cd03699">
    <property type="entry name" value="EF4_II"/>
    <property type="match status" value="1"/>
</dbReference>
<dbReference type="CDD" id="cd16260">
    <property type="entry name" value="EF4_III"/>
    <property type="match status" value="1"/>
</dbReference>
<dbReference type="CDD" id="cd01890">
    <property type="entry name" value="LepA"/>
    <property type="match status" value="1"/>
</dbReference>
<dbReference type="CDD" id="cd03709">
    <property type="entry name" value="lepA_C"/>
    <property type="match status" value="1"/>
</dbReference>
<dbReference type="FunFam" id="3.40.50.300:FF:000078">
    <property type="entry name" value="Elongation factor 4"/>
    <property type="match status" value="1"/>
</dbReference>
<dbReference type="FunFam" id="2.40.30.10:FF:000015">
    <property type="entry name" value="Translation factor GUF1, mitochondrial"/>
    <property type="match status" value="1"/>
</dbReference>
<dbReference type="FunFam" id="3.30.70.240:FF:000007">
    <property type="entry name" value="Translation factor GUF1, mitochondrial"/>
    <property type="match status" value="1"/>
</dbReference>
<dbReference type="FunFam" id="3.30.70.2570:FF:000001">
    <property type="entry name" value="Translation factor GUF1, mitochondrial"/>
    <property type="match status" value="1"/>
</dbReference>
<dbReference type="FunFam" id="3.30.70.870:FF:000004">
    <property type="entry name" value="Translation factor GUF1, mitochondrial"/>
    <property type="match status" value="1"/>
</dbReference>
<dbReference type="Gene3D" id="3.30.70.240">
    <property type="match status" value="1"/>
</dbReference>
<dbReference type="Gene3D" id="3.30.70.2570">
    <property type="entry name" value="Elongation factor 4, C-terminal domain"/>
    <property type="match status" value="1"/>
</dbReference>
<dbReference type="Gene3D" id="3.30.70.870">
    <property type="entry name" value="Elongation Factor G (Translational Gtpase), domain 3"/>
    <property type="match status" value="1"/>
</dbReference>
<dbReference type="Gene3D" id="3.40.50.300">
    <property type="entry name" value="P-loop containing nucleotide triphosphate hydrolases"/>
    <property type="match status" value="1"/>
</dbReference>
<dbReference type="Gene3D" id="2.40.30.10">
    <property type="entry name" value="Translation factors"/>
    <property type="match status" value="1"/>
</dbReference>
<dbReference type="HAMAP" id="MF_00071">
    <property type="entry name" value="LepA"/>
    <property type="match status" value="1"/>
</dbReference>
<dbReference type="InterPro" id="IPR006297">
    <property type="entry name" value="EF-4"/>
</dbReference>
<dbReference type="InterPro" id="IPR035647">
    <property type="entry name" value="EFG_III/V"/>
</dbReference>
<dbReference type="InterPro" id="IPR000640">
    <property type="entry name" value="EFG_V-like"/>
</dbReference>
<dbReference type="InterPro" id="IPR004161">
    <property type="entry name" value="EFTu-like_2"/>
</dbReference>
<dbReference type="InterPro" id="IPR038363">
    <property type="entry name" value="LepA_C_sf"/>
</dbReference>
<dbReference type="InterPro" id="IPR013842">
    <property type="entry name" value="LepA_CTD"/>
</dbReference>
<dbReference type="InterPro" id="IPR035654">
    <property type="entry name" value="LepA_IV"/>
</dbReference>
<dbReference type="InterPro" id="IPR027417">
    <property type="entry name" value="P-loop_NTPase"/>
</dbReference>
<dbReference type="InterPro" id="IPR005225">
    <property type="entry name" value="Small_GTP-bd"/>
</dbReference>
<dbReference type="InterPro" id="IPR000795">
    <property type="entry name" value="T_Tr_GTP-bd_dom"/>
</dbReference>
<dbReference type="InterPro" id="IPR009000">
    <property type="entry name" value="Transl_B-barrel_sf"/>
</dbReference>
<dbReference type="NCBIfam" id="TIGR01393">
    <property type="entry name" value="lepA"/>
    <property type="match status" value="1"/>
</dbReference>
<dbReference type="NCBIfam" id="TIGR00231">
    <property type="entry name" value="small_GTP"/>
    <property type="match status" value="1"/>
</dbReference>
<dbReference type="PANTHER" id="PTHR43512:SF4">
    <property type="entry name" value="TRANSLATION FACTOR GUF1 HOMOLOG, CHLOROPLASTIC"/>
    <property type="match status" value="1"/>
</dbReference>
<dbReference type="PANTHER" id="PTHR43512">
    <property type="entry name" value="TRANSLATION FACTOR GUF1-RELATED"/>
    <property type="match status" value="1"/>
</dbReference>
<dbReference type="Pfam" id="PF00679">
    <property type="entry name" value="EFG_C"/>
    <property type="match status" value="1"/>
</dbReference>
<dbReference type="Pfam" id="PF00009">
    <property type="entry name" value="GTP_EFTU"/>
    <property type="match status" value="1"/>
</dbReference>
<dbReference type="Pfam" id="PF03144">
    <property type="entry name" value="GTP_EFTU_D2"/>
    <property type="match status" value="1"/>
</dbReference>
<dbReference type="Pfam" id="PF06421">
    <property type="entry name" value="LepA_C"/>
    <property type="match status" value="1"/>
</dbReference>
<dbReference type="PRINTS" id="PR00315">
    <property type="entry name" value="ELONGATNFCT"/>
</dbReference>
<dbReference type="PRINTS" id="PR01037">
    <property type="entry name" value="TCRTETOQM"/>
</dbReference>
<dbReference type="SUPFAM" id="SSF54980">
    <property type="entry name" value="EF-G C-terminal domain-like"/>
    <property type="match status" value="2"/>
</dbReference>
<dbReference type="SUPFAM" id="SSF52540">
    <property type="entry name" value="P-loop containing nucleoside triphosphate hydrolases"/>
    <property type="match status" value="1"/>
</dbReference>
<dbReference type="SUPFAM" id="SSF50447">
    <property type="entry name" value="Translation proteins"/>
    <property type="match status" value="1"/>
</dbReference>
<dbReference type="PROSITE" id="PS51722">
    <property type="entry name" value="G_TR_2"/>
    <property type="match status" value="1"/>
</dbReference>